<dbReference type="EMBL" id="U49089">
    <property type="protein sequence ID" value="AAB61453.1"/>
    <property type="molecule type" value="mRNA"/>
</dbReference>
<dbReference type="EMBL" id="AB033058">
    <property type="protein sequence ID" value="BAA86546.1"/>
    <property type="status" value="ALT_INIT"/>
    <property type="molecule type" value="mRNA"/>
</dbReference>
<dbReference type="EMBL" id="AK303377">
    <property type="protein sequence ID" value="BAG64433.1"/>
    <property type="molecule type" value="mRNA"/>
</dbReference>
<dbReference type="EMBL" id="AK304020">
    <property type="protein sequence ID" value="BAG64935.1"/>
    <property type="molecule type" value="mRNA"/>
</dbReference>
<dbReference type="EMBL" id="AK316518">
    <property type="protein sequence ID" value="BAH14889.1"/>
    <property type="molecule type" value="mRNA"/>
</dbReference>
<dbReference type="EMBL" id="AL139109">
    <property type="status" value="NOT_ANNOTATED_CDS"/>
    <property type="molecule type" value="Genomic_DNA"/>
</dbReference>
<dbReference type="EMBL" id="AL139398">
    <property type="status" value="NOT_ANNOTATED_CDS"/>
    <property type="molecule type" value="Genomic_DNA"/>
</dbReference>
<dbReference type="EMBL" id="CH471132">
    <property type="protein sequence ID" value="EAX05333.1"/>
    <property type="molecule type" value="Genomic_DNA"/>
</dbReference>
<dbReference type="EMBL" id="CH471132">
    <property type="protein sequence ID" value="EAX05335.1"/>
    <property type="molecule type" value="Genomic_DNA"/>
</dbReference>
<dbReference type="EMBL" id="CH471132">
    <property type="protein sequence ID" value="EAX05337.1"/>
    <property type="molecule type" value="Genomic_DNA"/>
</dbReference>
<dbReference type="EMBL" id="CH471132">
    <property type="protein sequence ID" value="EAX05338.1"/>
    <property type="molecule type" value="Genomic_DNA"/>
</dbReference>
<dbReference type="EMBL" id="BC093864">
    <property type="protein sequence ID" value="AAH93864.1"/>
    <property type="molecule type" value="mRNA"/>
</dbReference>
<dbReference type="EMBL" id="BC093866">
    <property type="protein sequence ID" value="AAH93866.1"/>
    <property type="molecule type" value="mRNA"/>
</dbReference>
<dbReference type="CCDS" id="CCDS14403.1">
    <molecule id="Q92796-1"/>
</dbReference>
<dbReference type="CCDS" id="CCDS43967.1">
    <molecule id="Q92796-2"/>
</dbReference>
<dbReference type="CCDS" id="CCDS55439.1">
    <molecule id="Q92796-3"/>
</dbReference>
<dbReference type="RefSeq" id="NP_001159750.1">
    <molecule id="Q92796-3"/>
    <property type="nucleotide sequence ID" value="NM_001166278.2"/>
</dbReference>
<dbReference type="RefSeq" id="NP_065781.1">
    <molecule id="Q92796-2"/>
    <property type="nucleotide sequence ID" value="NM_020730.3"/>
</dbReference>
<dbReference type="RefSeq" id="NP_066943.2">
    <molecule id="Q92796-1"/>
    <property type="nucleotide sequence ID" value="NM_021120.4"/>
</dbReference>
<dbReference type="RefSeq" id="XP_005262305.1">
    <molecule id="Q92796-3"/>
    <property type="nucleotide sequence ID" value="XM_005262248.5"/>
</dbReference>
<dbReference type="RefSeq" id="XP_016884815.1">
    <property type="nucleotide sequence ID" value="XM_017029326.1"/>
</dbReference>
<dbReference type="RefSeq" id="XP_047297839.1">
    <molecule id="Q92796-3"/>
    <property type="nucleotide sequence ID" value="XM_047441883.1"/>
</dbReference>
<dbReference type="RefSeq" id="XP_047297840.1">
    <molecule id="Q92796-3"/>
    <property type="nucleotide sequence ID" value="XM_047441884.1"/>
</dbReference>
<dbReference type="RefSeq" id="XP_047297841.1">
    <molecule id="Q92796-3"/>
    <property type="nucleotide sequence ID" value="XM_047441885.1"/>
</dbReference>
<dbReference type="RefSeq" id="XP_047297842.1">
    <molecule id="Q92796-3"/>
    <property type="nucleotide sequence ID" value="XM_047441886.1"/>
</dbReference>
<dbReference type="RefSeq" id="XP_047297843.1">
    <molecule id="Q92796-3"/>
    <property type="nucleotide sequence ID" value="XM_047441887.1"/>
</dbReference>
<dbReference type="RefSeq" id="XP_054182585.1">
    <molecule id="Q92796-3"/>
    <property type="nucleotide sequence ID" value="XM_054326610.1"/>
</dbReference>
<dbReference type="RefSeq" id="XP_054182586.1">
    <molecule id="Q92796-3"/>
    <property type="nucleotide sequence ID" value="XM_054326611.1"/>
</dbReference>
<dbReference type="RefSeq" id="XP_054182587.1">
    <molecule id="Q92796-3"/>
    <property type="nucleotide sequence ID" value="XM_054326612.1"/>
</dbReference>
<dbReference type="RefSeq" id="XP_054182588.1">
    <molecule id="Q92796-3"/>
    <property type="nucleotide sequence ID" value="XM_054326613.1"/>
</dbReference>
<dbReference type="RefSeq" id="XP_054182589.1">
    <molecule id="Q92796-3"/>
    <property type="nucleotide sequence ID" value="XM_054326614.1"/>
</dbReference>
<dbReference type="RefSeq" id="XP_054182590.1">
    <molecule id="Q92796-3"/>
    <property type="nucleotide sequence ID" value="XM_054326615.1"/>
</dbReference>
<dbReference type="PDB" id="1UM7">
    <property type="method" value="NMR"/>
    <property type="chains" value="A=382-475"/>
</dbReference>
<dbReference type="PDB" id="2FE5">
    <property type="method" value="X-ray"/>
    <property type="resolution" value="1.10 A"/>
    <property type="chains" value="A=223-314"/>
</dbReference>
<dbReference type="PDB" id="2I1N">
    <property type="method" value="X-ray"/>
    <property type="resolution" value="1.85 A"/>
    <property type="chains" value="A/B=126-222"/>
</dbReference>
<dbReference type="PDBsum" id="1UM7"/>
<dbReference type="PDBsum" id="2FE5"/>
<dbReference type="PDBsum" id="2I1N"/>
<dbReference type="SMR" id="Q92796"/>
<dbReference type="BioGRID" id="108085">
    <property type="interactions" value="111"/>
</dbReference>
<dbReference type="ComplexPortal" id="CPX-6185">
    <property type="entry name" value="Scribble cell polarity complex, DLG3-LLGL2-SCRIB variant"/>
</dbReference>
<dbReference type="ComplexPortal" id="CPX-6190">
    <property type="entry name" value="Scribble cell polarity complex, DLG3-LLGL1-SCRIB variant"/>
</dbReference>
<dbReference type="CORUM" id="Q92796"/>
<dbReference type="FunCoup" id="Q92796">
    <property type="interactions" value="1151"/>
</dbReference>
<dbReference type="IntAct" id="Q92796">
    <property type="interactions" value="57"/>
</dbReference>
<dbReference type="MINT" id="Q92796"/>
<dbReference type="STRING" id="9606.ENSP00000363480"/>
<dbReference type="GlyGen" id="Q92796">
    <property type="glycosylation" value="1 site"/>
</dbReference>
<dbReference type="iPTMnet" id="Q92796"/>
<dbReference type="PhosphoSitePlus" id="Q92796"/>
<dbReference type="SwissPalm" id="Q92796"/>
<dbReference type="BioMuta" id="DLG3"/>
<dbReference type="DMDM" id="218512007"/>
<dbReference type="jPOST" id="Q92796"/>
<dbReference type="MassIVE" id="Q92796"/>
<dbReference type="PaxDb" id="9606-ENSP00000363480"/>
<dbReference type="PeptideAtlas" id="Q92796"/>
<dbReference type="ProteomicsDB" id="75474">
    <molecule id="Q92796-1"/>
</dbReference>
<dbReference type="ProteomicsDB" id="75475">
    <molecule id="Q92796-2"/>
</dbReference>
<dbReference type="ProteomicsDB" id="75476">
    <molecule id="Q92796-3"/>
</dbReference>
<dbReference type="Pumba" id="Q92796"/>
<dbReference type="ABCD" id="Q92796">
    <property type="antibodies" value="2 sequenced antibodies"/>
</dbReference>
<dbReference type="Antibodypedia" id="342">
    <property type="antibodies" value="329 antibodies from 34 providers"/>
</dbReference>
<dbReference type="DNASU" id="1741"/>
<dbReference type="Ensembl" id="ENST00000374355.8">
    <molecule id="Q92796-2"/>
    <property type="protein sequence ID" value="ENSP00000363475.3"/>
    <property type="gene ID" value="ENSG00000082458.12"/>
</dbReference>
<dbReference type="Ensembl" id="ENST00000374360.8">
    <molecule id="Q92796-1"/>
    <property type="protein sequence ID" value="ENSP00000363480.3"/>
    <property type="gene ID" value="ENSG00000082458.12"/>
</dbReference>
<dbReference type="Ensembl" id="ENST00000542398.1">
    <molecule id="Q92796-3"/>
    <property type="protein sequence ID" value="ENSP00000441393.1"/>
    <property type="gene ID" value="ENSG00000082458.12"/>
</dbReference>
<dbReference type="GeneID" id="1741"/>
<dbReference type="KEGG" id="hsa:1741"/>
<dbReference type="MANE-Select" id="ENST00000374360.8">
    <property type="protein sequence ID" value="ENSP00000363480.3"/>
    <property type="RefSeq nucleotide sequence ID" value="NM_021120.4"/>
    <property type="RefSeq protein sequence ID" value="NP_066943.2"/>
</dbReference>
<dbReference type="UCSC" id="uc004dyi.3">
    <molecule id="Q92796-1"/>
    <property type="organism name" value="human"/>
</dbReference>
<dbReference type="AGR" id="HGNC:2902"/>
<dbReference type="CTD" id="1741"/>
<dbReference type="DisGeNET" id="1741"/>
<dbReference type="GeneCards" id="DLG3"/>
<dbReference type="HGNC" id="HGNC:2902">
    <property type="gene designation" value="DLG3"/>
</dbReference>
<dbReference type="HPA" id="ENSG00000082458">
    <property type="expression patterns" value="Low tissue specificity"/>
</dbReference>
<dbReference type="MalaCards" id="DLG3"/>
<dbReference type="MIM" id="300189">
    <property type="type" value="gene"/>
</dbReference>
<dbReference type="MIM" id="300850">
    <property type="type" value="phenotype"/>
</dbReference>
<dbReference type="neXtProt" id="NX_Q92796"/>
<dbReference type="OpenTargets" id="ENSG00000082458"/>
<dbReference type="Orphanet" id="777">
    <property type="disease" value="X-linked non-syndromic intellectual disability"/>
</dbReference>
<dbReference type="PharmGKB" id="PA164741439"/>
<dbReference type="VEuPathDB" id="HostDB:ENSG00000082458"/>
<dbReference type="eggNOG" id="KOG0708">
    <property type="taxonomic scope" value="Eukaryota"/>
</dbReference>
<dbReference type="GeneTree" id="ENSGT00940000159565"/>
<dbReference type="HOGENOM" id="CLU_001715_4_2_1"/>
<dbReference type="InParanoid" id="Q92796"/>
<dbReference type="OMA" id="ENMAQEN"/>
<dbReference type="OrthoDB" id="78824at2759"/>
<dbReference type="PAN-GO" id="Q92796">
    <property type="GO annotations" value="7 GO annotations based on evolutionary models"/>
</dbReference>
<dbReference type="PhylomeDB" id="Q92796"/>
<dbReference type="TreeFam" id="TF323171"/>
<dbReference type="PathwayCommons" id="Q92796"/>
<dbReference type="Reactome" id="R-HSA-438066">
    <property type="pathway name" value="Unblocking of NMDA receptors, glutamate binding and activation"/>
</dbReference>
<dbReference type="Reactome" id="R-HSA-442982">
    <property type="pathway name" value="Ras activation upon Ca2+ influx through NMDA receptor"/>
</dbReference>
<dbReference type="Reactome" id="R-HSA-447038">
    <property type="pathway name" value="NrCAM interactions"/>
</dbReference>
<dbReference type="Reactome" id="R-HSA-451308">
    <property type="pathway name" value="Activation of Ca-permeable Kainate Receptor"/>
</dbReference>
<dbReference type="Reactome" id="R-HSA-5673001">
    <property type="pathway name" value="RAF/MAP kinase cascade"/>
</dbReference>
<dbReference type="Reactome" id="R-HSA-6794361">
    <property type="pathway name" value="Neurexins and neuroligins"/>
</dbReference>
<dbReference type="Reactome" id="R-HSA-8849932">
    <property type="pathway name" value="Synaptic adhesion-like molecules"/>
</dbReference>
<dbReference type="Reactome" id="R-HSA-9609736">
    <property type="pathway name" value="Assembly and cell surface presentation of NMDA receptors"/>
</dbReference>
<dbReference type="Reactome" id="R-HSA-9617324">
    <property type="pathway name" value="Negative regulation of NMDA receptor-mediated neuronal transmission"/>
</dbReference>
<dbReference type="Reactome" id="R-HSA-9620244">
    <property type="pathway name" value="Long-term potentiation"/>
</dbReference>
<dbReference type="SignaLink" id="Q92796"/>
<dbReference type="SIGNOR" id="Q92796"/>
<dbReference type="BioGRID-ORCS" id="1741">
    <property type="hits" value="9 hits in 779 CRISPR screens"/>
</dbReference>
<dbReference type="CD-CODE" id="232F8A39">
    <property type="entry name" value="P-body"/>
</dbReference>
<dbReference type="CD-CODE" id="FB4E32DD">
    <property type="entry name" value="Presynaptic clusters and postsynaptic densities"/>
</dbReference>
<dbReference type="ChiTaRS" id="DLG3">
    <property type="organism name" value="human"/>
</dbReference>
<dbReference type="EvolutionaryTrace" id="Q92796"/>
<dbReference type="GenomeRNAi" id="1741"/>
<dbReference type="Pharos" id="Q92796">
    <property type="development level" value="Tbio"/>
</dbReference>
<dbReference type="PRO" id="PR:Q92796"/>
<dbReference type="Proteomes" id="UP000005640">
    <property type="component" value="Chromosome X"/>
</dbReference>
<dbReference type="RNAct" id="Q92796">
    <property type="molecule type" value="protein"/>
</dbReference>
<dbReference type="Bgee" id="ENSG00000082458">
    <property type="expression patterns" value="Expressed in cortical plate and 197 other cell types or tissues"/>
</dbReference>
<dbReference type="ExpressionAtlas" id="Q92796">
    <property type="expression patterns" value="baseline and differential"/>
</dbReference>
<dbReference type="GO" id="GO:0005912">
    <property type="term" value="C:adherens junction"/>
    <property type="evidence" value="ECO:0000303"/>
    <property type="project" value="ComplexPortal"/>
</dbReference>
<dbReference type="GO" id="GO:0032281">
    <property type="term" value="C:AMPA glutamate receptor complex"/>
    <property type="evidence" value="ECO:0007669"/>
    <property type="project" value="Ensembl"/>
</dbReference>
<dbReference type="GO" id="GO:0016323">
    <property type="term" value="C:basolateral plasma membrane"/>
    <property type="evidence" value="ECO:0000318"/>
    <property type="project" value="GO_Central"/>
</dbReference>
<dbReference type="GO" id="GO:0005923">
    <property type="term" value="C:bicellular tight junction"/>
    <property type="evidence" value="ECO:0007669"/>
    <property type="project" value="Ensembl"/>
</dbReference>
<dbReference type="GO" id="GO:0005829">
    <property type="term" value="C:cytosol"/>
    <property type="evidence" value="ECO:0000304"/>
    <property type="project" value="Reactome"/>
</dbReference>
<dbReference type="GO" id="GO:0005615">
    <property type="term" value="C:extracellular space"/>
    <property type="evidence" value="ECO:0007005"/>
    <property type="project" value="UniProtKB"/>
</dbReference>
<dbReference type="GO" id="GO:0098978">
    <property type="term" value="C:glutamatergic synapse"/>
    <property type="evidence" value="ECO:0007669"/>
    <property type="project" value="Ensembl"/>
</dbReference>
<dbReference type="GO" id="GO:0031594">
    <property type="term" value="C:neuromuscular junction"/>
    <property type="evidence" value="ECO:0000318"/>
    <property type="project" value="GO_Central"/>
</dbReference>
<dbReference type="GO" id="GO:0043005">
    <property type="term" value="C:neuron projection"/>
    <property type="evidence" value="ECO:0000318"/>
    <property type="project" value="GO_Central"/>
</dbReference>
<dbReference type="GO" id="GO:0005886">
    <property type="term" value="C:plasma membrane"/>
    <property type="evidence" value="ECO:0000304"/>
    <property type="project" value="Reactome"/>
</dbReference>
<dbReference type="GO" id="GO:0098839">
    <property type="term" value="C:postsynaptic density membrane"/>
    <property type="evidence" value="ECO:0000318"/>
    <property type="project" value="GO_Central"/>
</dbReference>
<dbReference type="GO" id="GO:0035255">
    <property type="term" value="F:ionotropic glutamate receptor binding"/>
    <property type="evidence" value="ECO:0000318"/>
    <property type="project" value="GO_Central"/>
</dbReference>
<dbReference type="GO" id="GO:0019900">
    <property type="term" value="F:kinase binding"/>
    <property type="evidence" value="ECO:0000314"/>
    <property type="project" value="MGI"/>
</dbReference>
<dbReference type="GO" id="GO:0019902">
    <property type="term" value="F:phosphatase binding"/>
    <property type="evidence" value="ECO:0000314"/>
    <property type="project" value="UniProtKB"/>
</dbReference>
<dbReference type="GO" id="GO:0019901">
    <property type="term" value="F:protein kinase binding"/>
    <property type="evidence" value="ECO:0000318"/>
    <property type="project" value="GO_Central"/>
</dbReference>
<dbReference type="GO" id="GO:0031625">
    <property type="term" value="F:ubiquitin protein ligase binding"/>
    <property type="evidence" value="ECO:0007669"/>
    <property type="project" value="Ensembl"/>
</dbReference>
<dbReference type="GO" id="GO:0098609">
    <property type="term" value="P:cell-cell adhesion"/>
    <property type="evidence" value="ECO:0000318"/>
    <property type="project" value="GO_Central"/>
</dbReference>
<dbReference type="GO" id="GO:0007268">
    <property type="term" value="P:chemical synaptic transmission"/>
    <property type="evidence" value="ECO:0000318"/>
    <property type="project" value="GO_Central"/>
</dbReference>
<dbReference type="GO" id="GO:0001736">
    <property type="term" value="P:establishment of planar polarity"/>
    <property type="evidence" value="ECO:0007669"/>
    <property type="project" value="Ensembl"/>
</dbReference>
<dbReference type="GO" id="GO:0045197">
    <property type="term" value="P:establishment or maintenance of epithelial cell apical/basal polarity"/>
    <property type="evidence" value="ECO:0000318"/>
    <property type="project" value="GO_Central"/>
</dbReference>
<dbReference type="GO" id="GO:0008285">
    <property type="term" value="P:negative regulation of cell population proliferation"/>
    <property type="evidence" value="ECO:0000303"/>
    <property type="project" value="UniProtKB"/>
</dbReference>
<dbReference type="GO" id="GO:0007399">
    <property type="term" value="P:nervous system development"/>
    <property type="evidence" value="ECO:0000318"/>
    <property type="project" value="GO_Central"/>
</dbReference>
<dbReference type="GO" id="GO:0035418">
    <property type="term" value="P:protein localization to synapse"/>
    <property type="evidence" value="ECO:0000318"/>
    <property type="project" value="GO_Central"/>
</dbReference>
<dbReference type="GO" id="GO:0043113">
    <property type="term" value="P:receptor clustering"/>
    <property type="evidence" value="ECO:0000318"/>
    <property type="project" value="GO_Central"/>
</dbReference>
<dbReference type="GO" id="GO:0097120">
    <property type="term" value="P:receptor localization to synapse"/>
    <property type="evidence" value="ECO:0000318"/>
    <property type="project" value="GO_Central"/>
</dbReference>
<dbReference type="GO" id="GO:0099072">
    <property type="term" value="P:regulation of postsynaptic membrane neurotransmitter receptor levels"/>
    <property type="evidence" value="ECO:0000318"/>
    <property type="project" value="GO_Central"/>
</dbReference>
<dbReference type="CDD" id="cd00071">
    <property type="entry name" value="GMPK"/>
    <property type="match status" value="1"/>
</dbReference>
<dbReference type="CDD" id="cd06723">
    <property type="entry name" value="PDZ1_Dlg1-2-4-like"/>
    <property type="match status" value="1"/>
</dbReference>
<dbReference type="CDD" id="cd06724">
    <property type="entry name" value="PDZ2_Dlg1-2-4-like"/>
    <property type="match status" value="1"/>
</dbReference>
<dbReference type="CDD" id="cd06795">
    <property type="entry name" value="PDZ3_Dlg1-2-4-like"/>
    <property type="match status" value="1"/>
</dbReference>
<dbReference type="CDD" id="cd12029">
    <property type="entry name" value="SH3_DLG3"/>
    <property type="match status" value="1"/>
</dbReference>
<dbReference type="FunFam" id="3.40.50.300:FF:001402">
    <property type="entry name" value="Discs, large homolog 3 (Drosophila)"/>
    <property type="match status" value="1"/>
</dbReference>
<dbReference type="FunFam" id="2.30.30.40:FF:000008">
    <property type="entry name" value="Disks large homolog 1 isoform 2"/>
    <property type="match status" value="1"/>
</dbReference>
<dbReference type="FunFam" id="2.30.42.10:FF:000001">
    <property type="entry name" value="Disks large homolog 1 isoform 2"/>
    <property type="match status" value="1"/>
</dbReference>
<dbReference type="FunFam" id="3.30.63.10:FF:000001">
    <property type="entry name" value="Disks large homolog 1 isoform 2"/>
    <property type="match status" value="1"/>
</dbReference>
<dbReference type="FunFam" id="2.30.42.10:FF:000091">
    <property type="entry name" value="disks large homolog 1 isoform X8"/>
    <property type="match status" value="1"/>
</dbReference>
<dbReference type="FunFam" id="2.30.30.40:FF:000027">
    <property type="entry name" value="Disks large homolog 3 isoform 1"/>
    <property type="match status" value="1"/>
</dbReference>
<dbReference type="FunFam" id="2.30.42.10:FF:000002">
    <property type="entry name" value="Disks large homolog 4 isoform 2"/>
    <property type="match status" value="1"/>
</dbReference>
<dbReference type="Gene3D" id="2.30.42.10">
    <property type="match status" value="3"/>
</dbReference>
<dbReference type="Gene3D" id="3.30.63.10">
    <property type="entry name" value="Guanylate Kinase phosphate binding domain"/>
    <property type="match status" value="1"/>
</dbReference>
<dbReference type="Gene3D" id="3.40.50.300">
    <property type="entry name" value="P-loop containing nucleotide triphosphate hydrolases"/>
    <property type="match status" value="1"/>
</dbReference>
<dbReference type="Gene3D" id="2.30.30.40">
    <property type="entry name" value="SH3 Domains"/>
    <property type="match status" value="1"/>
</dbReference>
<dbReference type="InterPro" id="IPR019583">
    <property type="entry name" value="DLG1-4_PDZ_assoc"/>
</dbReference>
<dbReference type="InterPro" id="IPR016313">
    <property type="entry name" value="DLG1-like"/>
</dbReference>
<dbReference type="InterPro" id="IPR019590">
    <property type="entry name" value="DLG1_PEST_dom"/>
</dbReference>
<dbReference type="InterPro" id="IPR035763">
    <property type="entry name" value="DLG3_SH3"/>
</dbReference>
<dbReference type="InterPro" id="IPR008145">
    <property type="entry name" value="GK/Ca_channel_bsu"/>
</dbReference>
<dbReference type="InterPro" id="IPR008144">
    <property type="entry name" value="Guanylate_kin-like_dom"/>
</dbReference>
<dbReference type="InterPro" id="IPR020590">
    <property type="entry name" value="Guanylate_kinase_CS"/>
</dbReference>
<dbReference type="InterPro" id="IPR027417">
    <property type="entry name" value="P-loop_NTPase"/>
</dbReference>
<dbReference type="InterPro" id="IPR001478">
    <property type="entry name" value="PDZ"/>
</dbReference>
<dbReference type="InterPro" id="IPR036034">
    <property type="entry name" value="PDZ_sf"/>
</dbReference>
<dbReference type="InterPro" id="IPR036028">
    <property type="entry name" value="SH3-like_dom_sf"/>
</dbReference>
<dbReference type="InterPro" id="IPR001452">
    <property type="entry name" value="SH3_domain"/>
</dbReference>
<dbReference type="InterPro" id="IPR050614">
    <property type="entry name" value="Synaptic_Scaffolding_LAP-MAGUK"/>
</dbReference>
<dbReference type="PANTHER" id="PTHR23119">
    <property type="entry name" value="DISCS LARGE"/>
    <property type="match status" value="1"/>
</dbReference>
<dbReference type="PANTHER" id="PTHR23119:SF28">
    <property type="entry name" value="DISKS LARGE HOMOLOG 3"/>
    <property type="match status" value="1"/>
</dbReference>
<dbReference type="Pfam" id="PF00625">
    <property type="entry name" value="Guanylate_kin"/>
    <property type="match status" value="1"/>
</dbReference>
<dbReference type="Pfam" id="PF00595">
    <property type="entry name" value="PDZ"/>
    <property type="match status" value="3"/>
</dbReference>
<dbReference type="Pfam" id="PF10600">
    <property type="entry name" value="PDZ_assoc"/>
    <property type="match status" value="1"/>
</dbReference>
<dbReference type="Pfam" id="PF00018">
    <property type="entry name" value="SH3_1"/>
    <property type="match status" value="1"/>
</dbReference>
<dbReference type="PIRSF" id="PIRSF001741">
    <property type="entry name" value="MAGUK_DLGH"/>
    <property type="match status" value="1"/>
</dbReference>
<dbReference type="SMART" id="SM00072">
    <property type="entry name" value="GuKc"/>
    <property type="match status" value="1"/>
</dbReference>
<dbReference type="SMART" id="SM01277">
    <property type="entry name" value="MAGUK_N_PEST"/>
    <property type="match status" value="1"/>
</dbReference>
<dbReference type="SMART" id="SM00228">
    <property type="entry name" value="PDZ"/>
    <property type="match status" value="3"/>
</dbReference>
<dbReference type="SMART" id="SM00326">
    <property type="entry name" value="SH3"/>
    <property type="match status" value="1"/>
</dbReference>
<dbReference type="SUPFAM" id="SSF52540">
    <property type="entry name" value="P-loop containing nucleoside triphosphate hydrolases"/>
    <property type="match status" value="1"/>
</dbReference>
<dbReference type="SUPFAM" id="SSF50156">
    <property type="entry name" value="PDZ domain-like"/>
    <property type="match status" value="3"/>
</dbReference>
<dbReference type="SUPFAM" id="SSF50044">
    <property type="entry name" value="SH3-domain"/>
    <property type="match status" value="1"/>
</dbReference>
<dbReference type="PROSITE" id="PS00856">
    <property type="entry name" value="GUANYLATE_KINASE_1"/>
    <property type="match status" value="1"/>
</dbReference>
<dbReference type="PROSITE" id="PS50052">
    <property type="entry name" value="GUANYLATE_KINASE_2"/>
    <property type="match status" value="1"/>
</dbReference>
<dbReference type="PROSITE" id="PS50106">
    <property type="entry name" value="PDZ"/>
    <property type="match status" value="3"/>
</dbReference>
<dbReference type="PROSITE" id="PS50002">
    <property type="entry name" value="SH3"/>
    <property type="match status" value="1"/>
</dbReference>
<sequence>MHKHQHCCKCPECYEVTRLAALRRLEPPGYGDWQVPDPYGPGGGNGASAGYGGYSSQTLPSQAGATPTPRTKAKLIPTGRDVGPVPPKPVPGKSTPKLNGSGPSWWPECTCTNRDWYEQVNGSDGMFKYEEIVLERGNSGLGFSIAGGIDNPHVPDDPGIFITKIIPGGAAAMDGRLGVNDCVLRVNEVDVSEVVHSRAVEALKEAGPVVRLVVRRRQPPPETIMEVNLLKGPKGLGFSIAGGIGNQHIPGDNSIYITKIIEGGAAQKDGRLQIGDRLLAVNNTNLQDVRHEEAVASLKNTSDMVYLKVAKPGSLHLNDMYAPPDYASTFTALADNHISHNSSLGYLGAVESKVSYPAPPQVPPTRYSPIPRHMLAEEDFTREPRKIILHKGSTGLGFNIVGGEDGEGIFVSFILAGGPADLSGELRRGDRILSVNGVNLRNATHEQAAAALKRAGQSVTIVAQYRPEEYSRFESKIHDLREQMMNSSMSSGSGSLRTSEKRSLYVRALFDYDRTRDSCLPSQGLSFSYGDILHVINASDDEWWQARLVTPHGESEQIGVIPSKKRVEKKERARLKTVKFHARTGMIESNRDFPGLSDDYYGAKNLKGQEDAILSYEPVTRQEIHYARPVIILGPMKDRVNDDLISEFPHKFGSCVPHTTRPRRDNEVDGQDYHFVVSREQMEKDIQDNKFIEAGQFNDNLYGTSIQSVRAVAERGKHCILDVSGNAIKRLQQAQLYPIAIFIKPKSIEALMEMNRRQTYEQANKIYDKAMKLEQEFGEYFTAIVQGDSLEEIYNKIKQIIEDQSGHYIWVPSPEKL</sequence>
<protein>
    <recommendedName>
        <fullName>Disks large homolog 3</fullName>
    </recommendedName>
    <alternativeName>
        <fullName>Neuroendocrine-DLG</fullName>
    </alternativeName>
    <alternativeName>
        <fullName>Synapse-associated protein 102</fullName>
        <shortName>SAP-102</shortName>
        <shortName>SAP102</shortName>
    </alternativeName>
    <alternativeName>
        <fullName>XLMR</fullName>
    </alternativeName>
</protein>
<name>DLG3_HUMAN</name>
<feature type="chain" id="PRO_0000094557" description="Disks large homolog 3">
    <location>
        <begin position="1"/>
        <end position="817"/>
    </location>
</feature>
<feature type="domain" description="PDZ 1" evidence="4">
    <location>
        <begin position="130"/>
        <end position="217"/>
    </location>
</feature>
<feature type="domain" description="PDZ 2" evidence="4">
    <location>
        <begin position="226"/>
        <end position="311"/>
    </location>
</feature>
<feature type="domain" description="PDZ 3" evidence="4">
    <location>
        <begin position="379"/>
        <end position="465"/>
    </location>
</feature>
<feature type="domain" description="SH3" evidence="5">
    <location>
        <begin position="501"/>
        <end position="571"/>
    </location>
</feature>
<feature type="domain" description="Guanylate kinase-like" evidence="3">
    <location>
        <begin position="627"/>
        <end position="802"/>
    </location>
</feature>
<feature type="region of interest" description="Disordered" evidence="6">
    <location>
        <begin position="33"/>
        <end position="101"/>
    </location>
</feature>
<feature type="compositionally biased region" description="Gly residues" evidence="6">
    <location>
        <begin position="40"/>
        <end position="53"/>
    </location>
</feature>
<feature type="compositionally biased region" description="Polar residues" evidence="6">
    <location>
        <begin position="57"/>
        <end position="69"/>
    </location>
</feature>
<feature type="modified residue" description="Phosphoserine" evidence="1">
    <location>
        <position position="139"/>
    </location>
</feature>
<feature type="modified residue" description="Phosphotyrosine" evidence="1">
    <location>
        <position position="673"/>
    </location>
</feature>
<feature type="splice variant" id="VSP_043717" description="In isoform 3." evidence="15">
    <location>
        <begin position="1"/>
        <end position="483"/>
    </location>
</feature>
<feature type="splice variant" id="VSP_035940" description="In isoform 2." evidence="14 15">
    <location>
        <begin position="1"/>
        <end position="336"/>
    </location>
</feature>
<feature type="splice variant" id="VSP_035941" description="In isoform 2." evidence="14 15">
    <original>HISHNSSLGYLGAVESKVSYPAPPQVPPTRYSPIPRHMLAEEDFT</original>
    <variation>MERARKFSGSGLAMGLGSASASAWRRASQRWAWPLRSLRPGGDA</variation>
    <location>
        <begin position="337"/>
        <end position="381"/>
    </location>
</feature>
<feature type="splice variant" id="VSP_035942" description="In isoform 2 and isoform 3." evidence="14 15">
    <original>DFPGLSDDYYGAKNL</original>
    <variation>SIKTKRKKSFRLSRKFPFYKSKENMAQESSIQEQGVTSNTSDSESSS</variation>
    <location>
        <begin position="592"/>
        <end position="606"/>
    </location>
</feature>
<feature type="sequence variant" id="VAR_036591" description="In a colorectal cancer sample; somatic mutation; dbSNP:rs1449722258." evidence="10">
    <original>G</original>
    <variation>R</variation>
    <location>
        <position position="40"/>
    </location>
</feature>
<feature type="sequence conflict" description="In Ref. 1; AAB61453." evidence="16" ref="1">
    <original>P</original>
    <variation>L</variation>
    <location>
        <position position="87"/>
    </location>
</feature>
<feature type="sequence conflict" description="In Ref. 1; AAB61453." evidence="16" ref="1">
    <original>D</original>
    <variation>E</variation>
    <location>
        <position position="190"/>
    </location>
</feature>
<feature type="strand" evidence="20">
    <location>
        <begin position="127"/>
        <end position="135"/>
    </location>
</feature>
<feature type="strand" evidence="20">
    <location>
        <begin position="142"/>
        <end position="147"/>
    </location>
</feature>
<feature type="strand" evidence="20">
    <location>
        <begin position="160"/>
        <end position="165"/>
    </location>
</feature>
<feature type="helix" evidence="20">
    <location>
        <begin position="170"/>
        <end position="174"/>
    </location>
</feature>
<feature type="strand" evidence="20">
    <location>
        <begin position="182"/>
        <end position="186"/>
    </location>
</feature>
<feature type="helix" evidence="20">
    <location>
        <begin position="196"/>
        <end position="205"/>
    </location>
</feature>
<feature type="strand" evidence="20">
    <location>
        <begin position="208"/>
        <end position="217"/>
    </location>
</feature>
<feature type="strand" evidence="19">
    <location>
        <begin position="224"/>
        <end position="230"/>
    </location>
</feature>
<feature type="strand" evidence="19">
    <location>
        <begin position="238"/>
        <end position="242"/>
    </location>
</feature>
<feature type="strand" evidence="19">
    <location>
        <begin position="255"/>
        <end position="260"/>
    </location>
</feature>
<feature type="helix" evidence="19">
    <location>
        <begin position="265"/>
        <end position="269"/>
    </location>
</feature>
<feature type="strand" evidence="19">
    <location>
        <begin position="277"/>
        <end position="281"/>
    </location>
</feature>
<feature type="helix" evidence="19">
    <location>
        <begin position="291"/>
        <end position="299"/>
    </location>
</feature>
<feature type="strand" evidence="19">
    <location>
        <begin position="303"/>
        <end position="310"/>
    </location>
</feature>
<feature type="strand" evidence="18">
    <location>
        <begin position="383"/>
        <end position="390"/>
    </location>
</feature>
<feature type="strand" evidence="18">
    <location>
        <begin position="396"/>
        <end position="398"/>
    </location>
</feature>
<feature type="strand" evidence="18">
    <location>
        <begin position="416"/>
        <end position="418"/>
    </location>
</feature>
<feature type="helix" evidence="18">
    <location>
        <begin position="419"/>
        <end position="422"/>
    </location>
</feature>
<feature type="strand" evidence="18">
    <location>
        <begin position="431"/>
        <end position="437"/>
    </location>
</feature>
<feature type="helix" evidence="18">
    <location>
        <begin position="445"/>
        <end position="453"/>
    </location>
</feature>
<feature type="strand" evidence="18">
    <location>
        <begin position="457"/>
        <end position="464"/>
    </location>
</feature>
<feature type="helix" evidence="18">
    <location>
        <begin position="467"/>
        <end position="475"/>
    </location>
</feature>
<feature type="initiator methionine" description="Removed" evidence="17">
    <location sequence="Q92796-3">
        <position position="1"/>
    </location>
</feature>
<feature type="modified residue" description="N-acetylmethionine" evidence="17">
    <location sequence="Q92796-3">
        <position position="1"/>
    </location>
</feature>
<feature type="modified residue" description="N-acetylmethionine" evidence="17">
    <location sequence="Q92796-3">
        <position position="2"/>
    </location>
</feature>
<evidence type="ECO:0000250" key="1">
    <source>
        <dbReference type="UniProtKB" id="P70175"/>
    </source>
</evidence>
<evidence type="ECO:0000250" key="2">
    <source>
        <dbReference type="UniProtKB" id="Q62936"/>
    </source>
</evidence>
<evidence type="ECO:0000255" key="3">
    <source>
        <dbReference type="PROSITE-ProRule" id="PRU00100"/>
    </source>
</evidence>
<evidence type="ECO:0000255" key="4">
    <source>
        <dbReference type="PROSITE-ProRule" id="PRU00143"/>
    </source>
</evidence>
<evidence type="ECO:0000255" key="5">
    <source>
        <dbReference type="PROSITE-ProRule" id="PRU00192"/>
    </source>
</evidence>
<evidence type="ECO:0000256" key="6">
    <source>
        <dbReference type="SAM" id="MobiDB-lite"/>
    </source>
</evidence>
<evidence type="ECO:0000269" key="7">
    <source>
    </source>
</evidence>
<evidence type="ECO:0000269" key="8">
    <source>
    </source>
</evidence>
<evidence type="ECO:0000269" key="9">
    <source>
    </source>
</evidence>
<evidence type="ECO:0000269" key="10">
    <source>
    </source>
</evidence>
<evidence type="ECO:0000269" key="11">
    <source>
    </source>
</evidence>
<evidence type="ECO:0000269" key="12">
    <source>
    </source>
</evidence>
<evidence type="ECO:0000269" key="13">
    <source>
    </source>
</evidence>
<evidence type="ECO:0000303" key="14">
    <source>
    </source>
</evidence>
<evidence type="ECO:0000303" key="15">
    <source>
    </source>
</evidence>
<evidence type="ECO:0000305" key="16"/>
<evidence type="ECO:0007744" key="17">
    <source>
    </source>
</evidence>
<evidence type="ECO:0007829" key="18">
    <source>
        <dbReference type="PDB" id="1UM7"/>
    </source>
</evidence>
<evidence type="ECO:0007829" key="19">
    <source>
        <dbReference type="PDB" id="2FE5"/>
    </source>
</evidence>
<evidence type="ECO:0007829" key="20">
    <source>
        <dbReference type="PDB" id="2I1N"/>
    </source>
</evidence>
<organism>
    <name type="scientific">Homo sapiens</name>
    <name type="common">Human</name>
    <dbReference type="NCBI Taxonomy" id="9606"/>
    <lineage>
        <taxon>Eukaryota</taxon>
        <taxon>Metazoa</taxon>
        <taxon>Chordata</taxon>
        <taxon>Craniata</taxon>
        <taxon>Vertebrata</taxon>
        <taxon>Euteleostomi</taxon>
        <taxon>Mammalia</taxon>
        <taxon>Eutheria</taxon>
        <taxon>Euarchontoglires</taxon>
        <taxon>Primates</taxon>
        <taxon>Haplorrhini</taxon>
        <taxon>Catarrhini</taxon>
        <taxon>Hominidae</taxon>
        <taxon>Homo</taxon>
    </lineage>
</organism>
<gene>
    <name type="primary">DLG3</name>
    <name type="synonym">KIAA1232</name>
</gene>
<comment type="function">
    <text>Required for learning most likely through its role in synaptic plasticity following NMDA receptor signaling.</text>
</comment>
<comment type="subunit">
    <text evidence="1 2 7 9 11 12 13">Interacts through its PDZ domains with NETO1, GRIN2B and SYNGAP1. Interacts through its guanylate kinase-like domain with DLGAP1, DLGAP2, DLGAP3 and DLGAP4. Interacts with FLTP/C1orf192 (By similarity). Interacts through its PDZ domains with APC. Interacts through its first two PDZ domains with ERBB4. Interacts through its third PDZ domain with NLGN1, and probably with NLGN2 and NLGN3. Interacts with FRMPD4 (via C-terminus). Interacts with LRFN1, LRFN2 and LRFN4. Interacts with DGKI (via PDZ-binding motif) (By similarity).</text>
</comment>
<comment type="interaction">
    <interactant intactId="EBI-80440">
        <id>Q92796</id>
    </interactant>
    <interactant intactId="EBI-12225017">
        <id>Q6UWP2-2</id>
        <label>DHRS11</label>
    </interactant>
    <organismsDiffer>false</organismsDiffer>
    <experiments>3</experiments>
</comment>
<comment type="interaction">
    <interactant intactId="EBI-80440">
        <id>Q92796</id>
    </interactant>
    <interactant intactId="EBI-11961832">
        <id>Q6IS01</id>
        <label>DLGAP1</label>
    </interactant>
    <organismsDiffer>false</organismsDiffer>
    <experiments>3</experiments>
</comment>
<comment type="interaction">
    <interactant intactId="EBI-80440">
        <id>Q92796</id>
    </interactant>
    <interactant intactId="EBI-12019838">
        <id>Q9P1A6-3</id>
        <label>DLGAP2</label>
    </interactant>
    <organismsDiffer>false</organismsDiffer>
    <experiments>3</experiments>
</comment>
<comment type="interaction">
    <interactant intactId="EBI-80440">
        <id>Q92796</id>
    </interactant>
    <interactant intactId="EBI-12222405">
        <id>Q15056-2</id>
        <label>EIF4H</label>
    </interactant>
    <organismsDiffer>false</organismsDiffer>
    <experiments>3</experiments>
</comment>
<comment type="interaction">
    <interactant intactId="EBI-80440">
        <id>Q92796</id>
    </interactant>
    <interactant intactId="EBI-1043076">
        <id>P24390</id>
        <label>KDELR1</label>
    </interactant>
    <organismsDiffer>false</organismsDiffer>
    <experiments>3</experiments>
</comment>
<comment type="interaction">
    <interactant intactId="EBI-80440">
        <id>Q92796</id>
    </interactant>
    <interactant intactId="EBI-12211505">
        <id>Q969R2-2</id>
        <label>OSBP2</label>
    </interactant>
    <organismsDiffer>false</organismsDiffer>
    <experiments>3</experiments>
</comment>
<comment type="interaction">
    <interactant intactId="EBI-80440">
        <id>Q92796</id>
    </interactant>
    <interactant intactId="EBI-4401947">
        <id>Q9HB19</id>
        <label>PLEKHA2</label>
    </interactant>
    <organismsDiffer>false</organismsDiffer>
    <experiments>3</experiments>
</comment>
<comment type="interaction">
    <interactant intactId="EBI-80440">
        <id>Q92796</id>
    </interactant>
    <interactant intactId="EBI-357253">
        <id>P62136</id>
        <label>PPP1CA</label>
    </interactant>
    <organismsDiffer>false</organismsDiffer>
    <experiments>2</experiments>
</comment>
<comment type="interaction">
    <interactant intactId="EBI-80440">
        <id>Q92796</id>
    </interactant>
    <interactant intactId="EBI-351811">
        <id>P62241</id>
        <label>RPS8</label>
    </interactant>
    <organismsDiffer>false</organismsDiffer>
    <experiments>3</experiments>
</comment>
<comment type="interaction">
    <interactant intactId="EBI-80440">
        <id>Q92796</id>
    </interactant>
    <interactant intactId="EBI-1036653">
        <id>P04004</id>
        <label>VTN</label>
    </interactant>
    <organismsDiffer>false</organismsDiffer>
    <experiments>3</experiments>
</comment>
<comment type="alternative products">
    <event type="alternative splicing"/>
    <isoform>
        <id>Q92796-1</id>
        <name>1</name>
        <sequence type="displayed"/>
    </isoform>
    <isoform>
        <id>Q92796-2</id>
        <name>2</name>
        <sequence type="described" ref="VSP_035940 VSP_035941 VSP_035942"/>
    </isoform>
    <isoform>
        <id>Q92796-3</id>
        <name>3</name>
        <sequence type="described" ref="VSP_043717 VSP_035942"/>
    </isoform>
</comment>
<comment type="disease" evidence="8">
    <disease id="DI-00736">
        <name>Intellectual developmental disorder, X-linked 90</name>
        <acronym>XLID90</acronym>
        <description>A disorder characterized by significantly below average general intellectual functioning associated with impairments in adaptive behavior and manifested during the developmental period. Intellectual deficiency is the only primary symptom of non-syndromic X-linked intellectual disability, while syndromic forms presents with associated physical, neurological and/or psychiatric manifestations.</description>
        <dbReference type="MIM" id="300850"/>
    </disease>
    <text>The disease is caused by variants affecting the gene represented in this entry.</text>
</comment>
<comment type="similarity">
    <text evidence="16">Belongs to the MAGUK family.</text>
</comment>
<comment type="sequence caution" evidence="16">
    <conflict type="erroneous initiation">
        <sequence resource="EMBL-CDS" id="BAA86546"/>
    </conflict>
</comment>
<proteinExistence type="evidence at protein level"/>
<keyword id="KW-0002">3D-structure</keyword>
<keyword id="KW-0007">Acetylation</keyword>
<keyword id="KW-0025">Alternative splicing</keyword>
<keyword id="KW-0991">Intellectual disability</keyword>
<keyword id="KW-0597">Phosphoprotein</keyword>
<keyword id="KW-1267">Proteomics identification</keyword>
<keyword id="KW-1185">Reference proteome</keyword>
<keyword id="KW-0677">Repeat</keyword>
<keyword id="KW-0728">SH3 domain</keyword>
<reference key="1">
    <citation type="journal article" date="1997" name="Oncogene">
        <title>Cloning and characterization of NE-dlg: a novel human homolog of the Drosophila discs large (dlg) tumor suppressor protein interacts with the APC protein.</title>
        <authorList>
            <person name="Makino K."/>
            <person name="Kuwahara H."/>
            <person name="Masuko N."/>
            <person name="Nishiyama Y."/>
            <person name="Morisaki T."/>
            <person name="Sasaki J."/>
            <person name="Nakao M."/>
            <person name="Kuwano A."/>
            <person name="Nakata M."/>
            <person name="Ushio Y."/>
            <person name="Saya H."/>
        </authorList>
    </citation>
    <scope>NUCLEOTIDE SEQUENCE [MRNA] (ISOFORM 1)</scope>
    <scope>INTERACTION WITH APC</scope>
    <source>
        <tissue>Fetal brain</tissue>
    </source>
</reference>
<reference key="2">
    <citation type="journal article" date="1999" name="DNA Res.">
        <title>Prediction of the coding sequences of unidentified human genes. XV. The complete sequences of 100 new cDNA clones from brain which code for large proteins in vitro.</title>
        <authorList>
            <person name="Nagase T."/>
            <person name="Ishikawa K."/>
            <person name="Kikuno R."/>
            <person name="Hirosawa M."/>
            <person name="Nomura N."/>
            <person name="Ohara O."/>
        </authorList>
    </citation>
    <scope>NUCLEOTIDE SEQUENCE [LARGE SCALE MRNA] (ISOFORM 2)</scope>
    <source>
        <tissue>Brain</tissue>
    </source>
</reference>
<reference key="3">
    <citation type="journal article" date="2004" name="Nat. Genet.">
        <title>Complete sequencing and characterization of 21,243 full-length human cDNAs.</title>
        <authorList>
            <person name="Ota T."/>
            <person name="Suzuki Y."/>
            <person name="Nishikawa T."/>
            <person name="Otsuki T."/>
            <person name="Sugiyama T."/>
            <person name="Irie R."/>
            <person name="Wakamatsu A."/>
            <person name="Hayashi K."/>
            <person name="Sato H."/>
            <person name="Nagai K."/>
            <person name="Kimura K."/>
            <person name="Makita H."/>
            <person name="Sekine M."/>
            <person name="Obayashi M."/>
            <person name="Nishi T."/>
            <person name="Shibahara T."/>
            <person name="Tanaka T."/>
            <person name="Ishii S."/>
            <person name="Yamamoto J."/>
            <person name="Saito K."/>
            <person name="Kawai Y."/>
            <person name="Isono Y."/>
            <person name="Nakamura Y."/>
            <person name="Nagahari K."/>
            <person name="Murakami K."/>
            <person name="Yasuda T."/>
            <person name="Iwayanagi T."/>
            <person name="Wagatsuma M."/>
            <person name="Shiratori A."/>
            <person name="Sudo H."/>
            <person name="Hosoiri T."/>
            <person name="Kaku Y."/>
            <person name="Kodaira H."/>
            <person name="Kondo H."/>
            <person name="Sugawara M."/>
            <person name="Takahashi M."/>
            <person name="Kanda K."/>
            <person name="Yokoi T."/>
            <person name="Furuya T."/>
            <person name="Kikkawa E."/>
            <person name="Omura Y."/>
            <person name="Abe K."/>
            <person name="Kamihara K."/>
            <person name="Katsuta N."/>
            <person name="Sato K."/>
            <person name="Tanikawa M."/>
            <person name="Yamazaki M."/>
            <person name="Ninomiya K."/>
            <person name="Ishibashi T."/>
            <person name="Yamashita H."/>
            <person name="Murakawa K."/>
            <person name="Fujimori K."/>
            <person name="Tanai H."/>
            <person name="Kimata M."/>
            <person name="Watanabe M."/>
            <person name="Hiraoka S."/>
            <person name="Chiba Y."/>
            <person name="Ishida S."/>
            <person name="Ono Y."/>
            <person name="Takiguchi S."/>
            <person name="Watanabe S."/>
            <person name="Yosida M."/>
            <person name="Hotuta T."/>
            <person name="Kusano J."/>
            <person name="Kanehori K."/>
            <person name="Takahashi-Fujii A."/>
            <person name="Hara H."/>
            <person name="Tanase T.-O."/>
            <person name="Nomura Y."/>
            <person name="Togiya S."/>
            <person name="Komai F."/>
            <person name="Hara R."/>
            <person name="Takeuchi K."/>
            <person name="Arita M."/>
            <person name="Imose N."/>
            <person name="Musashino K."/>
            <person name="Yuuki H."/>
            <person name="Oshima A."/>
            <person name="Sasaki N."/>
            <person name="Aotsuka S."/>
            <person name="Yoshikawa Y."/>
            <person name="Matsunawa H."/>
            <person name="Ichihara T."/>
            <person name="Shiohata N."/>
            <person name="Sano S."/>
            <person name="Moriya S."/>
            <person name="Momiyama H."/>
            <person name="Satoh N."/>
            <person name="Takami S."/>
            <person name="Terashima Y."/>
            <person name="Suzuki O."/>
            <person name="Nakagawa S."/>
            <person name="Senoh A."/>
            <person name="Mizoguchi H."/>
            <person name="Goto Y."/>
            <person name="Shimizu F."/>
            <person name="Wakebe H."/>
            <person name="Hishigaki H."/>
            <person name="Watanabe T."/>
            <person name="Sugiyama A."/>
            <person name="Takemoto M."/>
            <person name="Kawakami B."/>
            <person name="Yamazaki M."/>
            <person name="Watanabe K."/>
            <person name="Kumagai A."/>
            <person name="Itakura S."/>
            <person name="Fukuzumi Y."/>
            <person name="Fujimori Y."/>
            <person name="Komiyama M."/>
            <person name="Tashiro H."/>
            <person name="Tanigami A."/>
            <person name="Fujiwara T."/>
            <person name="Ono T."/>
            <person name="Yamada K."/>
            <person name="Fujii Y."/>
            <person name="Ozaki K."/>
            <person name="Hirao M."/>
            <person name="Ohmori Y."/>
            <person name="Kawabata A."/>
            <person name="Hikiji T."/>
            <person name="Kobatake N."/>
            <person name="Inagaki H."/>
            <person name="Ikema Y."/>
            <person name="Okamoto S."/>
            <person name="Okitani R."/>
            <person name="Kawakami T."/>
            <person name="Noguchi S."/>
            <person name="Itoh T."/>
            <person name="Shigeta K."/>
            <person name="Senba T."/>
            <person name="Matsumura K."/>
            <person name="Nakajima Y."/>
            <person name="Mizuno T."/>
            <person name="Morinaga M."/>
            <person name="Sasaki M."/>
            <person name="Togashi T."/>
            <person name="Oyama M."/>
            <person name="Hata H."/>
            <person name="Watanabe M."/>
            <person name="Komatsu T."/>
            <person name="Mizushima-Sugano J."/>
            <person name="Satoh T."/>
            <person name="Shirai Y."/>
            <person name="Takahashi Y."/>
            <person name="Nakagawa K."/>
            <person name="Okumura K."/>
            <person name="Nagase T."/>
            <person name="Nomura N."/>
            <person name="Kikuchi H."/>
            <person name="Masuho Y."/>
            <person name="Yamashita R."/>
            <person name="Nakai K."/>
            <person name="Yada T."/>
            <person name="Nakamura Y."/>
            <person name="Ohara O."/>
            <person name="Isogai T."/>
            <person name="Sugano S."/>
        </authorList>
    </citation>
    <scope>NUCLEOTIDE SEQUENCE [LARGE SCALE MRNA] (ISOFORMS 2 AND 3)</scope>
    <source>
        <tissue>Thymus</tissue>
        <tissue>Trachea</tissue>
    </source>
</reference>
<reference key="4">
    <citation type="journal article" date="2005" name="Nature">
        <title>The DNA sequence of the human X chromosome.</title>
        <authorList>
            <person name="Ross M.T."/>
            <person name="Grafham D.V."/>
            <person name="Coffey A.J."/>
            <person name="Scherer S."/>
            <person name="McLay K."/>
            <person name="Muzny D."/>
            <person name="Platzer M."/>
            <person name="Howell G.R."/>
            <person name="Burrows C."/>
            <person name="Bird C.P."/>
            <person name="Frankish A."/>
            <person name="Lovell F.L."/>
            <person name="Howe K.L."/>
            <person name="Ashurst J.L."/>
            <person name="Fulton R.S."/>
            <person name="Sudbrak R."/>
            <person name="Wen G."/>
            <person name="Jones M.C."/>
            <person name="Hurles M.E."/>
            <person name="Andrews T.D."/>
            <person name="Scott C.E."/>
            <person name="Searle S."/>
            <person name="Ramser J."/>
            <person name="Whittaker A."/>
            <person name="Deadman R."/>
            <person name="Carter N.P."/>
            <person name="Hunt S.E."/>
            <person name="Chen R."/>
            <person name="Cree A."/>
            <person name="Gunaratne P."/>
            <person name="Havlak P."/>
            <person name="Hodgson A."/>
            <person name="Metzker M.L."/>
            <person name="Richards S."/>
            <person name="Scott G."/>
            <person name="Steffen D."/>
            <person name="Sodergren E."/>
            <person name="Wheeler D.A."/>
            <person name="Worley K.C."/>
            <person name="Ainscough R."/>
            <person name="Ambrose K.D."/>
            <person name="Ansari-Lari M.A."/>
            <person name="Aradhya S."/>
            <person name="Ashwell R.I."/>
            <person name="Babbage A.K."/>
            <person name="Bagguley C.L."/>
            <person name="Ballabio A."/>
            <person name="Banerjee R."/>
            <person name="Barker G.E."/>
            <person name="Barlow K.F."/>
            <person name="Barrett I.P."/>
            <person name="Bates K.N."/>
            <person name="Beare D.M."/>
            <person name="Beasley H."/>
            <person name="Beasley O."/>
            <person name="Beck A."/>
            <person name="Bethel G."/>
            <person name="Blechschmidt K."/>
            <person name="Brady N."/>
            <person name="Bray-Allen S."/>
            <person name="Bridgeman A.M."/>
            <person name="Brown A.J."/>
            <person name="Brown M.J."/>
            <person name="Bonnin D."/>
            <person name="Bruford E.A."/>
            <person name="Buhay C."/>
            <person name="Burch P."/>
            <person name="Burford D."/>
            <person name="Burgess J."/>
            <person name="Burrill W."/>
            <person name="Burton J."/>
            <person name="Bye J.M."/>
            <person name="Carder C."/>
            <person name="Carrel L."/>
            <person name="Chako J."/>
            <person name="Chapman J.C."/>
            <person name="Chavez D."/>
            <person name="Chen E."/>
            <person name="Chen G."/>
            <person name="Chen Y."/>
            <person name="Chen Z."/>
            <person name="Chinault C."/>
            <person name="Ciccodicola A."/>
            <person name="Clark S.Y."/>
            <person name="Clarke G."/>
            <person name="Clee C.M."/>
            <person name="Clegg S."/>
            <person name="Clerc-Blankenburg K."/>
            <person name="Clifford K."/>
            <person name="Cobley V."/>
            <person name="Cole C.G."/>
            <person name="Conquer J.S."/>
            <person name="Corby N."/>
            <person name="Connor R.E."/>
            <person name="David R."/>
            <person name="Davies J."/>
            <person name="Davis C."/>
            <person name="Davis J."/>
            <person name="Delgado O."/>
            <person name="Deshazo D."/>
            <person name="Dhami P."/>
            <person name="Ding Y."/>
            <person name="Dinh H."/>
            <person name="Dodsworth S."/>
            <person name="Draper H."/>
            <person name="Dugan-Rocha S."/>
            <person name="Dunham A."/>
            <person name="Dunn M."/>
            <person name="Durbin K.J."/>
            <person name="Dutta I."/>
            <person name="Eades T."/>
            <person name="Ellwood M."/>
            <person name="Emery-Cohen A."/>
            <person name="Errington H."/>
            <person name="Evans K.L."/>
            <person name="Faulkner L."/>
            <person name="Francis F."/>
            <person name="Frankland J."/>
            <person name="Fraser A.E."/>
            <person name="Galgoczy P."/>
            <person name="Gilbert J."/>
            <person name="Gill R."/>
            <person name="Gloeckner G."/>
            <person name="Gregory S.G."/>
            <person name="Gribble S."/>
            <person name="Griffiths C."/>
            <person name="Grocock R."/>
            <person name="Gu Y."/>
            <person name="Gwilliam R."/>
            <person name="Hamilton C."/>
            <person name="Hart E.A."/>
            <person name="Hawes A."/>
            <person name="Heath P.D."/>
            <person name="Heitmann K."/>
            <person name="Hennig S."/>
            <person name="Hernandez J."/>
            <person name="Hinzmann B."/>
            <person name="Ho S."/>
            <person name="Hoffs M."/>
            <person name="Howden P.J."/>
            <person name="Huckle E.J."/>
            <person name="Hume J."/>
            <person name="Hunt P.J."/>
            <person name="Hunt A.R."/>
            <person name="Isherwood J."/>
            <person name="Jacob L."/>
            <person name="Johnson D."/>
            <person name="Jones S."/>
            <person name="de Jong P.J."/>
            <person name="Joseph S.S."/>
            <person name="Keenan S."/>
            <person name="Kelly S."/>
            <person name="Kershaw J.K."/>
            <person name="Khan Z."/>
            <person name="Kioschis P."/>
            <person name="Klages S."/>
            <person name="Knights A.J."/>
            <person name="Kosiura A."/>
            <person name="Kovar-Smith C."/>
            <person name="Laird G.K."/>
            <person name="Langford C."/>
            <person name="Lawlor S."/>
            <person name="Leversha M."/>
            <person name="Lewis L."/>
            <person name="Liu W."/>
            <person name="Lloyd C."/>
            <person name="Lloyd D.M."/>
            <person name="Loulseged H."/>
            <person name="Loveland J.E."/>
            <person name="Lovell J.D."/>
            <person name="Lozado R."/>
            <person name="Lu J."/>
            <person name="Lyne R."/>
            <person name="Ma J."/>
            <person name="Maheshwari M."/>
            <person name="Matthews L.H."/>
            <person name="McDowall J."/>
            <person name="McLaren S."/>
            <person name="McMurray A."/>
            <person name="Meidl P."/>
            <person name="Meitinger T."/>
            <person name="Milne S."/>
            <person name="Miner G."/>
            <person name="Mistry S.L."/>
            <person name="Morgan M."/>
            <person name="Morris S."/>
            <person name="Mueller I."/>
            <person name="Mullikin J.C."/>
            <person name="Nguyen N."/>
            <person name="Nordsiek G."/>
            <person name="Nyakatura G."/>
            <person name="O'dell C.N."/>
            <person name="Okwuonu G."/>
            <person name="Palmer S."/>
            <person name="Pandian R."/>
            <person name="Parker D."/>
            <person name="Parrish J."/>
            <person name="Pasternak S."/>
            <person name="Patel D."/>
            <person name="Pearce A.V."/>
            <person name="Pearson D.M."/>
            <person name="Pelan S.E."/>
            <person name="Perez L."/>
            <person name="Porter K.M."/>
            <person name="Ramsey Y."/>
            <person name="Reichwald K."/>
            <person name="Rhodes S."/>
            <person name="Ridler K.A."/>
            <person name="Schlessinger D."/>
            <person name="Schueler M.G."/>
            <person name="Sehra H.K."/>
            <person name="Shaw-Smith C."/>
            <person name="Shen H."/>
            <person name="Sheridan E.M."/>
            <person name="Shownkeen R."/>
            <person name="Skuce C.D."/>
            <person name="Smith M.L."/>
            <person name="Sotheran E.C."/>
            <person name="Steingruber H.E."/>
            <person name="Steward C.A."/>
            <person name="Storey R."/>
            <person name="Swann R.M."/>
            <person name="Swarbreck D."/>
            <person name="Tabor P.E."/>
            <person name="Taudien S."/>
            <person name="Taylor T."/>
            <person name="Teague B."/>
            <person name="Thomas K."/>
            <person name="Thorpe A."/>
            <person name="Timms K."/>
            <person name="Tracey A."/>
            <person name="Trevanion S."/>
            <person name="Tromans A.C."/>
            <person name="d'Urso M."/>
            <person name="Verduzco D."/>
            <person name="Villasana D."/>
            <person name="Waldron L."/>
            <person name="Wall M."/>
            <person name="Wang Q."/>
            <person name="Warren J."/>
            <person name="Warry G.L."/>
            <person name="Wei X."/>
            <person name="West A."/>
            <person name="Whitehead S.L."/>
            <person name="Whiteley M.N."/>
            <person name="Wilkinson J.E."/>
            <person name="Willey D.L."/>
            <person name="Williams G."/>
            <person name="Williams L."/>
            <person name="Williamson A."/>
            <person name="Williamson H."/>
            <person name="Wilming L."/>
            <person name="Woodmansey R.L."/>
            <person name="Wray P.W."/>
            <person name="Yen J."/>
            <person name="Zhang J."/>
            <person name="Zhou J."/>
            <person name="Zoghbi H."/>
            <person name="Zorilla S."/>
            <person name="Buck D."/>
            <person name="Reinhardt R."/>
            <person name="Poustka A."/>
            <person name="Rosenthal A."/>
            <person name="Lehrach H."/>
            <person name="Meindl A."/>
            <person name="Minx P.J."/>
            <person name="Hillier L.W."/>
            <person name="Willard H.F."/>
            <person name="Wilson R.K."/>
            <person name="Waterston R.H."/>
            <person name="Rice C.M."/>
            <person name="Vaudin M."/>
            <person name="Coulson A."/>
            <person name="Nelson D.L."/>
            <person name="Weinstock G."/>
            <person name="Sulston J.E."/>
            <person name="Durbin R.M."/>
            <person name="Hubbard T."/>
            <person name="Gibbs R.A."/>
            <person name="Beck S."/>
            <person name="Rogers J."/>
            <person name="Bentley D.R."/>
        </authorList>
    </citation>
    <scope>NUCLEOTIDE SEQUENCE [LARGE SCALE GENOMIC DNA]</scope>
</reference>
<reference key="5">
    <citation type="submission" date="2005-09" db="EMBL/GenBank/DDBJ databases">
        <authorList>
            <person name="Mural R.J."/>
            <person name="Istrail S."/>
            <person name="Sutton G.G."/>
            <person name="Florea L."/>
            <person name="Halpern A.L."/>
            <person name="Mobarry C.M."/>
            <person name="Lippert R."/>
            <person name="Walenz B."/>
            <person name="Shatkay H."/>
            <person name="Dew I."/>
            <person name="Miller J.R."/>
            <person name="Flanigan M.J."/>
            <person name="Edwards N.J."/>
            <person name="Bolanos R."/>
            <person name="Fasulo D."/>
            <person name="Halldorsson B.V."/>
            <person name="Hannenhalli S."/>
            <person name="Turner R."/>
            <person name="Yooseph S."/>
            <person name="Lu F."/>
            <person name="Nusskern D.R."/>
            <person name="Shue B.C."/>
            <person name="Zheng X.H."/>
            <person name="Zhong F."/>
            <person name="Delcher A.L."/>
            <person name="Huson D.H."/>
            <person name="Kravitz S.A."/>
            <person name="Mouchard L."/>
            <person name="Reinert K."/>
            <person name="Remington K.A."/>
            <person name="Clark A.G."/>
            <person name="Waterman M.S."/>
            <person name="Eichler E.E."/>
            <person name="Adams M.D."/>
            <person name="Hunkapiller M.W."/>
            <person name="Myers E.W."/>
            <person name="Venter J.C."/>
        </authorList>
    </citation>
    <scope>NUCLEOTIDE SEQUENCE [LARGE SCALE GENOMIC DNA]</scope>
</reference>
<reference key="6">
    <citation type="journal article" date="2004" name="Genome Res.">
        <title>The status, quality, and expansion of the NIH full-length cDNA project: the Mammalian Gene Collection (MGC).</title>
        <authorList>
            <consortium name="The MGC Project Team"/>
        </authorList>
    </citation>
    <scope>NUCLEOTIDE SEQUENCE [LARGE SCALE MRNA] (ISOFORM 1)</scope>
    <source>
        <tissue>Brain</tissue>
    </source>
</reference>
<reference key="7">
    <citation type="journal article" date="1997" name="Science">
        <title>Binding of neuroligins to PSD-95.</title>
        <authorList>
            <person name="Irie M."/>
            <person name="Hata Y."/>
            <person name="Takeuchi M."/>
            <person name="Ichtchenko K."/>
            <person name="Toyoda A."/>
            <person name="Hirao K."/>
            <person name="Takai Y."/>
            <person name="Rosahl T.W."/>
            <person name="Suedhof T.C."/>
        </authorList>
    </citation>
    <scope>INTERACTION WITH NLGN1; NLGN2 AND NLGN3</scope>
</reference>
<reference key="8">
    <citation type="journal article" date="2000" name="Proc. Natl. Acad. Sci. U.S.A.">
        <title>The neuregulin receptor ErbB-4 interacts with PDZ-containing proteins at neuronal synapses.</title>
        <authorList>
            <person name="Garcia R.A."/>
            <person name="Vasudevan K."/>
            <person name="Buonanno A."/>
        </authorList>
    </citation>
    <scope>INTERACTION WITH ERBB4</scope>
</reference>
<reference key="9">
    <citation type="journal article" date="2004" name="Am. J. Hum. Genet.">
        <title>Mutations in the DLG3 gene cause nonsyndromic X-linked mental retardation.</title>
        <authorList>
            <person name="Tarpey P."/>
            <person name="Parnau J."/>
            <person name="Blow M."/>
            <person name="Woffendin H."/>
            <person name="Bignell G."/>
            <person name="Cox C."/>
            <person name="Cox J."/>
            <person name="Davies H."/>
            <person name="Edkins S."/>
            <person name="Holden S."/>
            <person name="Korny A."/>
            <person name="Mallya U."/>
            <person name="Moon J."/>
            <person name="O'Meara S."/>
            <person name="Parker A."/>
            <person name="Stephens P."/>
            <person name="Stevens C."/>
            <person name="Teague J."/>
            <person name="Donnelly A."/>
            <person name="Mangelsdorf M."/>
            <person name="Mulley J."/>
            <person name="Partington M."/>
            <person name="Turner G."/>
            <person name="Stevenson R."/>
            <person name="Schwartz C."/>
            <person name="Young I."/>
            <person name="Easton D."/>
            <person name="Bobrow M."/>
            <person name="Futreal P.A."/>
            <person name="Stratton M.R."/>
            <person name="Gecz J."/>
            <person name="Wooster R."/>
            <person name="Raymond F.L."/>
        </authorList>
    </citation>
    <scope>INVOLVEMENT IN XLID90</scope>
</reference>
<reference key="10">
    <citation type="journal article" date="2006" name="Neuron">
        <title>SALM synaptic cell adhesion-like molecules regulate the differentiation of excitatory synapses.</title>
        <authorList>
            <person name="Ko J."/>
            <person name="Kim S."/>
            <person name="Chung H.S."/>
            <person name="Kim K."/>
            <person name="Han K."/>
            <person name="Kim H."/>
            <person name="Jun H."/>
            <person name="Kaang B.-K."/>
            <person name="Kim E."/>
        </authorList>
    </citation>
    <scope>INTERACTION WITH LRFN1; LRFN2 AND LRFN4</scope>
</reference>
<reference key="11">
    <citation type="journal article" date="2008" name="J. Neurosci.">
        <title>Preso, a novel PSD-95-interacting FERM and PDZ domain protein that regulates dendritic spine morphogenesis.</title>
        <authorList>
            <person name="Lee H.W."/>
            <person name="Choi J."/>
            <person name="Shin H."/>
            <person name="Kim K."/>
            <person name="Yang J."/>
            <person name="Na M."/>
            <person name="Choi S.Y."/>
            <person name="Kang G.B."/>
            <person name="Eom S.H."/>
            <person name="Kim H."/>
            <person name="Kim E."/>
        </authorList>
    </citation>
    <scope>INTERACTION WITH FRMPD4</scope>
</reference>
<reference key="12">
    <citation type="journal article" date="2011" name="Sci. Signal.">
        <title>System-wide temporal characterization of the proteome and phosphoproteome of human embryonic stem cell differentiation.</title>
        <authorList>
            <person name="Rigbolt K.T."/>
            <person name="Prokhorova T.A."/>
            <person name="Akimov V."/>
            <person name="Henningsen J."/>
            <person name="Johansen P.T."/>
            <person name="Kratchmarova I."/>
            <person name="Kassem M."/>
            <person name="Mann M."/>
            <person name="Olsen J.V."/>
            <person name="Blagoev B."/>
        </authorList>
    </citation>
    <scope>IDENTIFICATION BY MASS SPECTROMETRY [LARGE SCALE ANALYSIS]</scope>
</reference>
<reference key="13">
    <citation type="journal article" date="2012" name="Proc. Natl. Acad. Sci. U.S.A.">
        <title>N-terminal acetylome analyses and functional insights of the N-terminal acetyltransferase NatB.</title>
        <authorList>
            <person name="Van Damme P."/>
            <person name="Lasa M."/>
            <person name="Polevoda B."/>
            <person name="Gazquez C."/>
            <person name="Elosegui-Artola A."/>
            <person name="Kim D.S."/>
            <person name="De Juan-Pardo E."/>
            <person name="Demeyer K."/>
            <person name="Hole K."/>
            <person name="Larrea E."/>
            <person name="Timmerman E."/>
            <person name="Prieto J."/>
            <person name="Arnesen T."/>
            <person name="Sherman F."/>
            <person name="Gevaert K."/>
            <person name="Aldabe R."/>
        </authorList>
    </citation>
    <scope>ACETYLATION [LARGE SCALE ANALYSIS] AT MET-1 AND MET-2 (ISOFORM 3)</scope>
    <scope>CLEAVAGE OF INITIATOR METHIONINE [LARGE SCALE ANALYSIS] (ISOFORM 3)</scope>
    <scope>IDENTIFICATION BY MASS SPECTROMETRY [LARGE SCALE ANALYSIS]</scope>
</reference>
<reference key="14">
    <citation type="submission" date="2004-03" db="PDB data bank">
        <title>Solution structure of the third PDZ domain of synapse-associated protein 102.</title>
        <authorList>
            <consortium name="RIKEN structural genomics initiative (RSGI)"/>
        </authorList>
    </citation>
    <scope>STRUCTURE BY NMR OF 382-475</scope>
</reference>
<reference key="15">
    <citation type="submission" date="2005-12" db="PDB data bank">
        <title>The crystal structure of the second PDZ domain of human DLG3.</title>
        <authorList>
            <consortium name="Structural genomics consortium (SGC)"/>
        </authorList>
    </citation>
    <scope>X-RAY CRYSTALLOGRAPHY (1.1 ANGSTROMS) OF 223-314</scope>
</reference>
<reference key="16">
    <citation type="journal article" date="2006" name="Science">
        <title>The consensus coding sequences of human breast and colorectal cancers.</title>
        <authorList>
            <person name="Sjoeblom T."/>
            <person name="Jones S."/>
            <person name="Wood L.D."/>
            <person name="Parsons D.W."/>
            <person name="Lin J."/>
            <person name="Barber T.D."/>
            <person name="Mandelker D."/>
            <person name="Leary R.J."/>
            <person name="Ptak J."/>
            <person name="Silliman N."/>
            <person name="Szabo S."/>
            <person name="Buckhaults P."/>
            <person name="Farrell C."/>
            <person name="Meeh P."/>
            <person name="Markowitz S.D."/>
            <person name="Willis J."/>
            <person name="Dawson D."/>
            <person name="Willson J.K.V."/>
            <person name="Gazdar A.F."/>
            <person name="Hartigan J."/>
            <person name="Wu L."/>
            <person name="Liu C."/>
            <person name="Parmigiani G."/>
            <person name="Park B.H."/>
            <person name="Bachman K.E."/>
            <person name="Papadopoulos N."/>
            <person name="Vogelstein B."/>
            <person name="Kinzler K.W."/>
            <person name="Velculescu V.E."/>
        </authorList>
    </citation>
    <scope>VARIANT [LARGE SCALE ANALYSIS] ARG-40</scope>
</reference>
<accession>Q92796</accession>
<accession>B4E0H1</accession>
<accession>D3DVU5</accession>
<accession>Q5JUW6</accession>
<accession>Q5JUW7</accession>
<accession>Q9ULI8</accession>